<proteinExistence type="inferred from homology"/>
<evidence type="ECO:0000250" key="1">
    <source>
        <dbReference type="UniProtKB" id="Q47PU3"/>
    </source>
</evidence>
<evidence type="ECO:0000255" key="2"/>
<evidence type="ECO:0000255" key="3">
    <source>
        <dbReference type="PROSITE-ProRule" id="PRU00498"/>
    </source>
</evidence>
<evidence type="ECO:0000269" key="4">
    <source>
    </source>
</evidence>
<evidence type="ECO:0000303" key="5">
    <source>
    </source>
</evidence>
<evidence type="ECO:0000305" key="6"/>
<evidence type="ECO:0000305" key="7">
    <source>
    </source>
</evidence>
<accession>A0A0L1JEZ9</accession>
<gene>
    <name evidence="5" type="primary">rstn6</name>
    <name type="ORF">ANOM_001445</name>
</gene>
<reference key="1">
    <citation type="journal article" date="2015" name="BMC Genomics">
        <title>Genomic sequence of the aflatoxigenic filamentous fungus Aspergillus nomius.</title>
        <authorList>
            <person name="Moore G.G."/>
            <person name="Mack B.M."/>
            <person name="Beltz S.B."/>
        </authorList>
    </citation>
    <scope>NUCLEOTIDE SEQUENCE [LARGE SCALE GENOMIC DNA]</scope>
    <source>
        <strain>ATCC 15546 / NRRL 13137 / CBS 260.88 / M93</strain>
    </source>
</reference>
<reference key="2">
    <citation type="journal article" date="2021" name="J. Am. Chem. Soc.">
        <title>Targeted genome mining reveals the biosynthetic gene clusters of natural product CYP51 inhibitors.</title>
        <authorList>
            <person name="Liu N."/>
            <person name="Abramyan E.D."/>
            <person name="Cheng W."/>
            <person name="Perlatti B."/>
            <person name="Harvey C.J.B."/>
            <person name="Bills G.F."/>
            <person name="Tang Y."/>
        </authorList>
    </citation>
    <scope>FUNCTION</scope>
    <scope>PATHWAY</scope>
</reference>
<keyword id="KW-0274">FAD</keyword>
<keyword id="KW-0285">Flavoprotein</keyword>
<keyword id="KW-0325">Glycoprotein</keyword>
<keyword id="KW-0503">Monooxygenase</keyword>
<keyword id="KW-0560">Oxidoreductase</keyword>
<keyword id="KW-1185">Reference proteome</keyword>
<keyword id="KW-0732">Signal</keyword>
<organism>
    <name type="scientific">Aspergillus nomiae NRRL (strain ATCC 15546 / NRRL 13137 / CBS 260.88 / M93)</name>
    <dbReference type="NCBI Taxonomy" id="1509407"/>
    <lineage>
        <taxon>Eukaryota</taxon>
        <taxon>Fungi</taxon>
        <taxon>Dikarya</taxon>
        <taxon>Ascomycota</taxon>
        <taxon>Pezizomycotina</taxon>
        <taxon>Eurotiomycetes</taxon>
        <taxon>Eurotiomycetidae</taxon>
        <taxon>Eurotiales</taxon>
        <taxon>Aspergillaceae</taxon>
        <taxon>Aspergillus</taxon>
        <taxon>Aspergillus subgen. Circumdati</taxon>
    </lineage>
</organism>
<feature type="signal peptide" evidence="2">
    <location>
        <begin position="1"/>
        <end position="17"/>
    </location>
</feature>
<feature type="chain" id="PRO_0000461542" description="FAD-dependent monooxygenase rstn6">
    <location>
        <begin position="18"/>
        <end position="575"/>
    </location>
</feature>
<feature type="binding site" evidence="1">
    <location>
        <position position="106"/>
    </location>
    <ligand>
        <name>FAD</name>
        <dbReference type="ChEBI" id="CHEBI:57692"/>
    </ligand>
</feature>
<feature type="glycosylation site" description="N-linked (GlcNAc...) asparagine" evidence="3">
    <location>
        <position position="239"/>
    </location>
</feature>
<feature type="glycosylation site" description="N-linked (GlcNAc...) asparagine" evidence="3">
    <location>
        <position position="295"/>
    </location>
</feature>
<comment type="function">
    <text evidence="4">FAD-dependent monooxygenase; part of the gene cluster that mediates the biosynthesis of the tetrahydropyranyl antifungal agent restricticin that acts as an inhibitor of CYP51 and blocks the ergosterol biosynthesis (PubMed:33857369). The highly reducing polyketide synthase rstn3, the short chain dehydrogenase rstn4, the cyclase rstn5, the FAD-dependent monooxygenase rstn6 and the enoylreductase rstn7 are required to generate the first stable intermediate desmethylrestrictinol. Rstn3 with rstn7 biosynthesize the first polyketide chain intermediate that is reduced by rstn4, followed by epoxidation by rstn6 before 6-endo cyclization via epoxide opening by rstn5 leads to desmethylrestrictinol. The methyltransferase rstn1 then catalyzes the C4 O-methylation of desmethylrestrictinol to produce restrictinol, and the nonribosomal peptide synthetase rstn8 catalyzes the C3 esterification of restrictinol with glycine that leads to restricticin (PubMed:33857369).</text>
</comment>
<comment type="cofactor">
    <cofactor evidence="6">
        <name>FAD</name>
        <dbReference type="ChEBI" id="CHEBI:57692"/>
    </cofactor>
</comment>
<comment type="pathway">
    <text evidence="4">Antifungal biosynthesis.</text>
</comment>
<comment type="similarity">
    <text evidence="6">Belongs to the FAD-binding monooxygenase family.</text>
</comment>
<name>RSTN6_ASPN3</name>
<protein>
    <recommendedName>
        <fullName evidence="5">FAD-dependent monooxygenase rstn6</fullName>
        <ecNumber evidence="7">1.-.-.-</ecNumber>
    </recommendedName>
    <alternativeName>
        <fullName evidence="5">Restricticin biosynthesis cluster protein 6</fullName>
    </alternativeName>
</protein>
<dbReference type="EC" id="1.-.-.-" evidence="7"/>
<dbReference type="EMBL" id="JNOM01000015">
    <property type="protein sequence ID" value="KNG90321.1"/>
    <property type="molecule type" value="Genomic_DNA"/>
</dbReference>
<dbReference type="RefSeq" id="XP_015411244.1">
    <property type="nucleotide sequence ID" value="XM_015546702.1"/>
</dbReference>
<dbReference type="GeneID" id="26803249"/>
<dbReference type="OrthoDB" id="37380at5052"/>
<dbReference type="Proteomes" id="UP000037505">
    <property type="component" value="Unassembled WGS sequence"/>
</dbReference>
<dbReference type="GO" id="GO:0004497">
    <property type="term" value="F:monooxygenase activity"/>
    <property type="evidence" value="ECO:0007669"/>
    <property type="project" value="UniProtKB-KW"/>
</dbReference>
<dbReference type="Gene3D" id="3.50.50.60">
    <property type="entry name" value="FAD/NAD(P)-binding domain"/>
    <property type="match status" value="1"/>
</dbReference>
<dbReference type="InterPro" id="IPR036188">
    <property type="entry name" value="FAD/NAD-bd_sf"/>
</dbReference>
<dbReference type="InterPro" id="IPR050346">
    <property type="entry name" value="FMO-like"/>
</dbReference>
<dbReference type="PANTHER" id="PTHR23023">
    <property type="entry name" value="DIMETHYLANILINE MONOOXYGENASE"/>
    <property type="match status" value="1"/>
</dbReference>
<dbReference type="Pfam" id="PF13738">
    <property type="entry name" value="Pyr_redox_3"/>
    <property type="match status" value="1"/>
</dbReference>
<dbReference type="SUPFAM" id="SSF51905">
    <property type="entry name" value="FAD/NAD(P)-binding domain"/>
    <property type="match status" value="2"/>
</dbReference>
<sequence>MYDVIVIGAGWCGLVAAKTYLQVCPDARLLLVDGDSSIGGTWSKERLYPHLVAEAHHGLFEFSDLPMRRDTVLPDGRIPSAAVHDYLTEYATKFDLIDRIRLNTWIENVRREPAVIGDNEAPRWMLTVAGSCEQIPTKKIIIATGLTSEPYMPFLPGRQEFEGEVLHSKALGHPQTGDRISDPSVRHAVVYGGSKSAFDAVYLLLRAGKTVDWVIREQGGGPSMMTPLSILGQPSFRLNNSRLLALFSPHPFDTTVKASWWQRVMHRRSGRLAQLAVIGFWRILAYLLQRPWKYNQSANGRRLRPLLALDSLFWSPATLGVMTHPELWDDIHSGERVTIHRQAITALGKDKRVILDNGVELSADLVVCATGWHARHTLFKPEEQLAVGLPSAVSFDPKSQSEWINLQRKADQEIIEEMPILQKSPVPSVPFRCEDDYHLYRFIAPSREPPSHERSIAYVGFLRTAGAPIVYEAQSLWATAYLTGALDVPGPSERISEVARTNAWIRRRYICGRKVPFALFDFLPYVDMLYRDLGVNPHRKANMVAEICGLYQPRDFQGVVSEWLASRGVKDIENV</sequence>